<dbReference type="EMBL" id="CP000606">
    <property type="protein sequence ID" value="ABO25712.1"/>
    <property type="molecule type" value="Genomic_DNA"/>
</dbReference>
<dbReference type="RefSeq" id="WP_011867640.1">
    <property type="nucleotide sequence ID" value="NC_009092.1"/>
</dbReference>
<dbReference type="SMR" id="A3QJR4"/>
<dbReference type="STRING" id="323850.Shew_3849"/>
<dbReference type="KEGG" id="slo:Shew_3849"/>
<dbReference type="eggNOG" id="COG0711">
    <property type="taxonomic scope" value="Bacteria"/>
</dbReference>
<dbReference type="HOGENOM" id="CLU_079215_4_5_6"/>
<dbReference type="OrthoDB" id="9788020at2"/>
<dbReference type="Proteomes" id="UP000001558">
    <property type="component" value="Chromosome"/>
</dbReference>
<dbReference type="GO" id="GO:0005886">
    <property type="term" value="C:plasma membrane"/>
    <property type="evidence" value="ECO:0007669"/>
    <property type="project" value="UniProtKB-SubCell"/>
</dbReference>
<dbReference type="GO" id="GO:0045259">
    <property type="term" value="C:proton-transporting ATP synthase complex"/>
    <property type="evidence" value="ECO:0007669"/>
    <property type="project" value="UniProtKB-KW"/>
</dbReference>
<dbReference type="GO" id="GO:0046933">
    <property type="term" value="F:proton-transporting ATP synthase activity, rotational mechanism"/>
    <property type="evidence" value="ECO:0007669"/>
    <property type="project" value="UniProtKB-UniRule"/>
</dbReference>
<dbReference type="GO" id="GO:0046961">
    <property type="term" value="F:proton-transporting ATPase activity, rotational mechanism"/>
    <property type="evidence" value="ECO:0007669"/>
    <property type="project" value="TreeGrafter"/>
</dbReference>
<dbReference type="CDD" id="cd06503">
    <property type="entry name" value="ATP-synt_Fo_b"/>
    <property type="match status" value="1"/>
</dbReference>
<dbReference type="Gene3D" id="6.10.250.1580">
    <property type="match status" value="1"/>
</dbReference>
<dbReference type="HAMAP" id="MF_01398">
    <property type="entry name" value="ATP_synth_b_bprime"/>
    <property type="match status" value="1"/>
</dbReference>
<dbReference type="InterPro" id="IPR028987">
    <property type="entry name" value="ATP_synth_B-like_membr_sf"/>
</dbReference>
<dbReference type="InterPro" id="IPR002146">
    <property type="entry name" value="ATP_synth_b/b'su_bac/chlpt"/>
</dbReference>
<dbReference type="InterPro" id="IPR005864">
    <property type="entry name" value="ATP_synth_F0_bsu_bac"/>
</dbReference>
<dbReference type="InterPro" id="IPR050059">
    <property type="entry name" value="ATP_synthase_B_chain"/>
</dbReference>
<dbReference type="NCBIfam" id="TIGR01144">
    <property type="entry name" value="ATP_synt_b"/>
    <property type="match status" value="1"/>
</dbReference>
<dbReference type="NCBIfam" id="NF004411">
    <property type="entry name" value="PRK05759.1-2"/>
    <property type="match status" value="1"/>
</dbReference>
<dbReference type="NCBIfam" id="NF004413">
    <property type="entry name" value="PRK05759.1-4"/>
    <property type="match status" value="1"/>
</dbReference>
<dbReference type="PANTHER" id="PTHR33445:SF1">
    <property type="entry name" value="ATP SYNTHASE SUBUNIT B"/>
    <property type="match status" value="1"/>
</dbReference>
<dbReference type="PANTHER" id="PTHR33445">
    <property type="entry name" value="ATP SYNTHASE SUBUNIT B', CHLOROPLASTIC"/>
    <property type="match status" value="1"/>
</dbReference>
<dbReference type="Pfam" id="PF00430">
    <property type="entry name" value="ATP-synt_B"/>
    <property type="match status" value="1"/>
</dbReference>
<dbReference type="SUPFAM" id="SSF81573">
    <property type="entry name" value="F1F0 ATP synthase subunit B, membrane domain"/>
    <property type="match status" value="1"/>
</dbReference>
<accession>A3QJR4</accession>
<name>ATPF_SHELP</name>
<gene>
    <name evidence="1" type="primary">atpF</name>
    <name type="ordered locus">Shew_3849</name>
</gene>
<sequence>MNINVTLIGQTVAFIIFVWFCMKFVWPPLMNAIEERQKRIADGLADADRAVKDLELAQAKATDQLKEAKATANEIIEQANKRKAQIVDEAKAEADAERAKIIAQGKAEIEAERNRVKEDLRKQVAALAIAGAEKILERSIDEAAHSDIVNKLVAEI</sequence>
<evidence type="ECO:0000255" key="1">
    <source>
        <dbReference type="HAMAP-Rule" id="MF_01398"/>
    </source>
</evidence>
<reference key="1">
    <citation type="submission" date="2007-03" db="EMBL/GenBank/DDBJ databases">
        <title>Complete sequence of Shewanella loihica PV-4.</title>
        <authorList>
            <consortium name="US DOE Joint Genome Institute"/>
            <person name="Copeland A."/>
            <person name="Lucas S."/>
            <person name="Lapidus A."/>
            <person name="Barry K."/>
            <person name="Detter J.C."/>
            <person name="Glavina del Rio T."/>
            <person name="Hammon N."/>
            <person name="Israni S."/>
            <person name="Dalin E."/>
            <person name="Tice H."/>
            <person name="Pitluck S."/>
            <person name="Chain P."/>
            <person name="Malfatti S."/>
            <person name="Shin M."/>
            <person name="Vergez L."/>
            <person name="Schmutz J."/>
            <person name="Larimer F."/>
            <person name="Land M."/>
            <person name="Hauser L."/>
            <person name="Kyrpides N."/>
            <person name="Mikhailova N."/>
            <person name="Romine M.F."/>
            <person name="Serres G."/>
            <person name="Fredrickson J."/>
            <person name="Tiedje J."/>
            <person name="Richardson P."/>
        </authorList>
    </citation>
    <scope>NUCLEOTIDE SEQUENCE [LARGE SCALE GENOMIC DNA]</scope>
    <source>
        <strain>ATCC BAA-1088 / PV-4</strain>
    </source>
</reference>
<protein>
    <recommendedName>
        <fullName evidence="1">ATP synthase subunit b</fullName>
    </recommendedName>
    <alternativeName>
        <fullName evidence="1">ATP synthase F(0) sector subunit b</fullName>
    </alternativeName>
    <alternativeName>
        <fullName evidence="1">ATPase subunit I</fullName>
    </alternativeName>
    <alternativeName>
        <fullName evidence="1">F-type ATPase subunit b</fullName>
        <shortName evidence="1">F-ATPase subunit b</shortName>
    </alternativeName>
</protein>
<keyword id="KW-0066">ATP synthesis</keyword>
<keyword id="KW-0997">Cell inner membrane</keyword>
<keyword id="KW-1003">Cell membrane</keyword>
<keyword id="KW-0138">CF(0)</keyword>
<keyword id="KW-0375">Hydrogen ion transport</keyword>
<keyword id="KW-0406">Ion transport</keyword>
<keyword id="KW-0472">Membrane</keyword>
<keyword id="KW-1185">Reference proteome</keyword>
<keyword id="KW-0812">Transmembrane</keyword>
<keyword id="KW-1133">Transmembrane helix</keyword>
<keyword id="KW-0813">Transport</keyword>
<organism>
    <name type="scientific">Shewanella loihica (strain ATCC BAA-1088 / PV-4)</name>
    <dbReference type="NCBI Taxonomy" id="323850"/>
    <lineage>
        <taxon>Bacteria</taxon>
        <taxon>Pseudomonadati</taxon>
        <taxon>Pseudomonadota</taxon>
        <taxon>Gammaproteobacteria</taxon>
        <taxon>Alteromonadales</taxon>
        <taxon>Shewanellaceae</taxon>
        <taxon>Shewanella</taxon>
    </lineage>
</organism>
<feature type="chain" id="PRO_0000368760" description="ATP synthase subunit b">
    <location>
        <begin position="1"/>
        <end position="156"/>
    </location>
</feature>
<feature type="transmembrane region" description="Helical" evidence="1">
    <location>
        <begin position="5"/>
        <end position="25"/>
    </location>
</feature>
<proteinExistence type="inferred from homology"/>
<comment type="function">
    <text evidence="1">F(1)F(0) ATP synthase produces ATP from ADP in the presence of a proton or sodium gradient. F-type ATPases consist of two structural domains, F(1) containing the extramembraneous catalytic core and F(0) containing the membrane proton channel, linked together by a central stalk and a peripheral stalk. During catalysis, ATP synthesis in the catalytic domain of F(1) is coupled via a rotary mechanism of the central stalk subunits to proton translocation.</text>
</comment>
<comment type="function">
    <text evidence="1">Component of the F(0) channel, it forms part of the peripheral stalk, linking F(1) to F(0).</text>
</comment>
<comment type="subunit">
    <text evidence="1">F-type ATPases have 2 components, F(1) - the catalytic core - and F(0) - the membrane proton channel. F(1) has five subunits: alpha(3), beta(3), gamma(1), delta(1), epsilon(1). F(0) has three main subunits: a(1), b(2) and c(10-14). The alpha and beta chains form an alternating ring which encloses part of the gamma chain. F(1) is attached to F(0) by a central stalk formed by the gamma and epsilon chains, while a peripheral stalk is formed by the delta and b chains.</text>
</comment>
<comment type="subcellular location">
    <subcellularLocation>
        <location evidence="1">Cell inner membrane</location>
        <topology evidence="1">Single-pass membrane protein</topology>
    </subcellularLocation>
</comment>
<comment type="similarity">
    <text evidence="1">Belongs to the ATPase B chain family.</text>
</comment>